<keyword id="KW-0067">ATP-binding</keyword>
<keyword id="KW-0963">Cytoplasm</keyword>
<keyword id="KW-0418">Kinase</keyword>
<keyword id="KW-0547">Nucleotide-binding</keyword>
<keyword id="KW-0808">Transferase</keyword>
<sequence>MTDQSHQCVIIGIAGASASGKSLIASTLYRELREQVGDEHIGVIPEDSYYKDQSHLSMEERVKTNYDHPNAMDHSLLFQHLQALKRGSAIELPVYSYVEHTRMQETVRVEPKKVIILEGILLLTDARLREEMNFSIFVDTPLDICLMRRIKRDVNERGRSMDSVMAQYQKTVRPMFLQFIEPSKQYADIIVPCGGKNRIAIDILKAKISQFFE</sequence>
<name>URK_SALPA</name>
<protein>
    <recommendedName>
        <fullName evidence="1">Uridine kinase</fullName>
        <ecNumber evidence="1">2.7.1.48</ecNumber>
    </recommendedName>
    <alternativeName>
        <fullName evidence="1">Cytidine monophosphokinase</fullName>
    </alternativeName>
    <alternativeName>
        <fullName evidence="1">Uridine monophosphokinase</fullName>
    </alternativeName>
</protein>
<accession>Q5PDX6</accession>
<feature type="chain" id="PRO_1000017889" description="Uridine kinase">
    <location>
        <begin position="1"/>
        <end position="213"/>
    </location>
</feature>
<feature type="binding site" evidence="1">
    <location>
        <begin position="15"/>
        <end position="22"/>
    </location>
    <ligand>
        <name>ATP</name>
        <dbReference type="ChEBI" id="CHEBI:30616"/>
    </ligand>
</feature>
<gene>
    <name evidence="1" type="primary">udk</name>
    <name type="ordered locus">SPA0744</name>
</gene>
<comment type="catalytic activity">
    <reaction evidence="1">
        <text>uridine + ATP = UMP + ADP + H(+)</text>
        <dbReference type="Rhea" id="RHEA:16825"/>
        <dbReference type="ChEBI" id="CHEBI:15378"/>
        <dbReference type="ChEBI" id="CHEBI:16704"/>
        <dbReference type="ChEBI" id="CHEBI:30616"/>
        <dbReference type="ChEBI" id="CHEBI:57865"/>
        <dbReference type="ChEBI" id="CHEBI:456216"/>
        <dbReference type="EC" id="2.7.1.48"/>
    </reaction>
</comment>
<comment type="catalytic activity">
    <reaction evidence="1">
        <text>cytidine + ATP = CMP + ADP + H(+)</text>
        <dbReference type="Rhea" id="RHEA:24674"/>
        <dbReference type="ChEBI" id="CHEBI:15378"/>
        <dbReference type="ChEBI" id="CHEBI:17562"/>
        <dbReference type="ChEBI" id="CHEBI:30616"/>
        <dbReference type="ChEBI" id="CHEBI:60377"/>
        <dbReference type="ChEBI" id="CHEBI:456216"/>
        <dbReference type="EC" id="2.7.1.48"/>
    </reaction>
</comment>
<comment type="pathway">
    <text evidence="1">Pyrimidine metabolism; CTP biosynthesis via salvage pathway; CTP from cytidine: step 1/3.</text>
</comment>
<comment type="pathway">
    <text evidence="1">Pyrimidine metabolism; UMP biosynthesis via salvage pathway; UMP from uridine: step 1/1.</text>
</comment>
<comment type="subcellular location">
    <subcellularLocation>
        <location evidence="1">Cytoplasm</location>
    </subcellularLocation>
</comment>
<comment type="similarity">
    <text evidence="1">Belongs to the uridine kinase family.</text>
</comment>
<evidence type="ECO:0000255" key="1">
    <source>
        <dbReference type="HAMAP-Rule" id="MF_00551"/>
    </source>
</evidence>
<dbReference type="EC" id="2.7.1.48" evidence="1"/>
<dbReference type="EMBL" id="CP000026">
    <property type="protein sequence ID" value="AAV76740.1"/>
    <property type="molecule type" value="Genomic_DNA"/>
</dbReference>
<dbReference type="RefSeq" id="WP_000132081.1">
    <property type="nucleotide sequence ID" value="NC_006511.1"/>
</dbReference>
<dbReference type="SMR" id="Q5PDX6"/>
<dbReference type="KEGG" id="spt:SPA0744"/>
<dbReference type="HOGENOM" id="CLU_021278_1_2_6"/>
<dbReference type="UniPathway" id="UPA00574">
    <property type="reaction ID" value="UER00637"/>
</dbReference>
<dbReference type="UniPathway" id="UPA00579">
    <property type="reaction ID" value="UER00640"/>
</dbReference>
<dbReference type="Proteomes" id="UP000008185">
    <property type="component" value="Chromosome"/>
</dbReference>
<dbReference type="GO" id="GO:0005737">
    <property type="term" value="C:cytoplasm"/>
    <property type="evidence" value="ECO:0007669"/>
    <property type="project" value="UniProtKB-SubCell"/>
</dbReference>
<dbReference type="GO" id="GO:0005524">
    <property type="term" value="F:ATP binding"/>
    <property type="evidence" value="ECO:0007669"/>
    <property type="project" value="UniProtKB-UniRule"/>
</dbReference>
<dbReference type="GO" id="GO:0043771">
    <property type="term" value="F:cytidine kinase activity"/>
    <property type="evidence" value="ECO:0007669"/>
    <property type="project" value="RHEA"/>
</dbReference>
<dbReference type="GO" id="GO:0004849">
    <property type="term" value="F:uridine kinase activity"/>
    <property type="evidence" value="ECO:0007669"/>
    <property type="project" value="UniProtKB-UniRule"/>
</dbReference>
<dbReference type="GO" id="GO:0044211">
    <property type="term" value="P:CTP salvage"/>
    <property type="evidence" value="ECO:0007669"/>
    <property type="project" value="UniProtKB-UniRule"/>
</dbReference>
<dbReference type="GO" id="GO:0044206">
    <property type="term" value="P:UMP salvage"/>
    <property type="evidence" value="ECO:0007669"/>
    <property type="project" value="UniProtKB-UniRule"/>
</dbReference>
<dbReference type="CDD" id="cd02023">
    <property type="entry name" value="UMPK"/>
    <property type="match status" value="1"/>
</dbReference>
<dbReference type="FunFam" id="3.40.50.300:FF:000252">
    <property type="entry name" value="Uridine kinase"/>
    <property type="match status" value="1"/>
</dbReference>
<dbReference type="Gene3D" id="3.40.50.300">
    <property type="entry name" value="P-loop containing nucleotide triphosphate hydrolases"/>
    <property type="match status" value="1"/>
</dbReference>
<dbReference type="HAMAP" id="MF_00551">
    <property type="entry name" value="Uridine_kinase"/>
    <property type="match status" value="1"/>
</dbReference>
<dbReference type="InterPro" id="IPR027417">
    <property type="entry name" value="P-loop_NTPase"/>
</dbReference>
<dbReference type="InterPro" id="IPR006083">
    <property type="entry name" value="PRK/URK"/>
</dbReference>
<dbReference type="InterPro" id="IPR026008">
    <property type="entry name" value="Uridine_kinase"/>
</dbReference>
<dbReference type="InterPro" id="IPR000764">
    <property type="entry name" value="Uridine_kinase-like"/>
</dbReference>
<dbReference type="NCBIfam" id="NF004018">
    <property type="entry name" value="PRK05480.1"/>
    <property type="match status" value="1"/>
</dbReference>
<dbReference type="NCBIfam" id="TIGR00235">
    <property type="entry name" value="udk"/>
    <property type="match status" value="1"/>
</dbReference>
<dbReference type="PANTHER" id="PTHR10285">
    <property type="entry name" value="URIDINE KINASE"/>
    <property type="match status" value="1"/>
</dbReference>
<dbReference type="Pfam" id="PF00485">
    <property type="entry name" value="PRK"/>
    <property type="match status" value="1"/>
</dbReference>
<dbReference type="PRINTS" id="PR00988">
    <property type="entry name" value="URIDINKINASE"/>
</dbReference>
<dbReference type="SUPFAM" id="SSF52540">
    <property type="entry name" value="P-loop containing nucleoside triphosphate hydrolases"/>
    <property type="match status" value="1"/>
</dbReference>
<proteinExistence type="inferred from homology"/>
<reference key="1">
    <citation type="journal article" date="2004" name="Nat. Genet.">
        <title>Comparison of genome degradation in Paratyphi A and Typhi, human-restricted serovars of Salmonella enterica that cause typhoid.</title>
        <authorList>
            <person name="McClelland M."/>
            <person name="Sanderson K.E."/>
            <person name="Clifton S.W."/>
            <person name="Latreille P."/>
            <person name="Porwollik S."/>
            <person name="Sabo A."/>
            <person name="Meyer R."/>
            <person name="Bieri T."/>
            <person name="Ozersky P."/>
            <person name="McLellan M."/>
            <person name="Harkins C.R."/>
            <person name="Wang C."/>
            <person name="Nguyen C."/>
            <person name="Berghoff A."/>
            <person name="Elliott G."/>
            <person name="Kohlberg S."/>
            <person name="Strong C."/>
            <person name="Du F."/>
            <person name="Carter J."/>
            <person name="Kremizki C."/>
            <person name="Layman D."/>
            <person name="Leonard S."/>
            <person name="Sun H."/>
            <person name="Fulton L."/>
            <person name="Nash W."/>
            <person name="Miner T."/>
            <person name="Minx P."/>
            <person name="Delehaunty K."/>
            <person name="Fronick C."/>
            <person name="Magrini V."/>
            <person name="Nhan M."/>
            <person name="Warren W."/>
            <person name="Florea L."/>
            <person name="Spieth J."/>
            <person name="Wilson R.K."/>
        </authorList>
    </citation>
    <scope>NUCLEOTIDE SEQUENCE [LARGE SCALE GENOMIC DNA]</scope>
    <source>
        <strain>ATCC 9150 / SARB42</strain>
    </source>
</reference>
<organism>
    <name type="scientific">Salmonella paratyphi A (strain ATCC 9150 / SARB42)</name>
    <dbReference type="NCBI Taxonomy" id="295319"/>
    <lineage>
        <taxon>Bacteria</taxon>
        <taxon>Pseudomonadati</taxon>
        <taxon>Pseudomonadota</taxon>
        <taxon>Gammaproteobacteria</taxon>
        <taxon>Enterobacterales</taxon>
        <taxon>Enterobacteriaceae</taxon>
        <taxon>Salmonella</taxon>
    </lineage>
</organism>